<evidence type="ECO:0000255" key="1">
    <source>
        <dbReference type="HAMAP-Rule" id="MF_00837"/>
    </source>
</evidence>
<evidence type="ECO:0000305" key="2"/>
<sequence>MLKVNKYVILIIAFVSQMMFSTTAQASFSATVSDAWSTLSNNVTQTWQAPEHYDLYVPVITWHARFAYDQEKIDNYNERPWGAGFGMSRWDEKGNWNGLYLMAFKDSFNKWEPIVGYGWEKTWRPLADDNFHLGLGYTLGVTARDNWNYIPLPVILPMASVGYGPATFQMTYIPGTYNNGNVYFAWLRFQF</sequence>
<accession>E3G4M5</accession>
<feature type="signal peptide" evidence="1">
    <location>
        <begin position="1"/>
        <end position="26"/>
    </location>
</feature>
<feature type="chain" id="PRO_0000414439" description="Lipid A acyltransferase PagP">
    <location>
        <begin position="27"/>
        <end position="191"/>
    </location>
</feature>
<feature type="active site" evidence="1">
    <location>
        <position position="63"/>
    </location>
</feature>
<feature type="active site" evidence="1">
    <location>
        <position position="106"/>
    </location>
</feature>
<feature type="active site" evidence="1">
    <location>
        <position position="107"/>
    </location>
</feature>
<feature type="site" description="Role in lipopolysaccharide recognition" evidence="1">
    <location>
        <position position="72"/>
    </location>
</feature>
<feature type="site" description="Role in the phospholipid gating" evidence="1">
    <location>
        <position position="177"/>
    </location>
</feature>
<proteinExistence type="inferred from homology"/>
<dbReference type="EC" id="2.3.1.251" evidence="1"/>
<dbReference type="EMBL" id="CP002272">
    <property type="protein sequence ID" value="ADO49419.1"/>
    <property type="status" value="ALT_INIT"/>
    <property type="molecule type" value="Genomic_DNA"/>
</dbReference>
<dbReference type="RefSeq" id="WP_162098842.1">
    <property type="nucleotide sequence ID" value="NC_014618.1"/>
</dbReference>
<dbReference type="SMR" id="E3G4M5"/>
<dbReference type="STRING" id="701347.Entcl_3173"/>
<dbReference type="KEGG" id="esc:Entcl_3173"/>
<dbReference type="eggNOG" id="ENOG502Z7SY">
    <property type="taxonomic scope" value="Bacteria"/>
</dbReference>
<dbReference type="HOGENOM" id="CLU_104099_0_0_6"/>
<dbReference type="Proteomes" id="UP000006872">
    <property type="component" value="Chromosome"/>
</dbReference>
<dbReference type="GO" id="GO:0009279">
    <property type="term" value="C:cell outer membrane"/>
    <property type="evidence" value="ECO:0007669"/>
    <property type="project" value="UniProtKB-SubCell"/>
</dbReference>
<dbReference type="GO" id="GO:0016746">
    <property type="term" value="F:acyltransferase activity"/>
    <property type="evidence" value="ECO:0007669"/>
    <property type="project" value="UniProtKB-UniRule"/>
</dbReference>
<dbReference type="GO" id="GO:0009245">
    <property type="term" value="P:lipid A biosynthetic process"/>
    <property type="evidence" value="ECO:0007669"/>
    <property type="project" value="UniProtKB-UniRule"/>
</dbReference>
<dbReference type="FunFam" id="2.40.160.20:FF:000002">
    <property type="entry name" value="Lipid A palmitoyltransferase PagP"/>
    <property type="match status" value="1"/>
</dbReference>
<dbReference type="Gene3D" id="2.40.160.20">
    <property type="match status" value="1"/>
</dbReference>
<dbReference type="HAMAP" id="MF_00837">
    <property type="entry name" value="PagP_transferase"/>
    <property type="match status" value="1"/>
</dbReference>
<dbReference type="InterPro" id="IPR009746">
    <property type="entry name" value="LipidA_acyl_PagP"/>
</dbReference>
<dbReference type="InterPro" id="IPR011250">
    <property type="entry name" value="OMP/PagP_b-brl"/>
</dbReference>
<dbReference type="NCBIfam" id="NF008271">
    <property type="entry name" value="PRK11045.1"/>
    <property type="match status" value="1"/>
</dbReference>
<dbReference type="Pfam" id="PF07017">
    <property type="entry name" value="PagP"/>
    <property type="match status" value="1"/>
</dbReference>
<dbReference type="SUPFAM" id="SSF56925">
    <property type="entry name" value="OMPA-like"/>
    <property type="match status" value="1"/>
</dbReference>
<protein>
    <recommendedName>
        <fullName evidence="1">Lipid A acyltransferase PagP</fullName>
        <ecNumber evidence="1">2.3.1.251</ecNumber>
    </recommendedName>
    <alternativeName>
        <fullName evidence="1">Lipid A acylation protein</fullName>
    </alternativeName>
</protein>
<organism>
    <name type="scientific">Enterobacter lignolyticus (strain SCF1)</name>
    <dbReference type="NCBI Taxonomy" id="701347"/>
    <lineage>
        <taxon>Bacteria</taxon>
        <taxon>Pseudomonadati</taxon>
        <taxon>Pseudomonadota</taxon>
        <taxon>Gammaproteobacteria</taxon>
        <taxon>Enterobacterales</taxon>
        <taxon>Enterobacteriaceae</taxon>
        <taxon>Pluralibacter</taxon>
    </lineage>
</organism>
<gene>
    <name evidence="1" type="primary">pagP</name>
    <name type="ordered locus">Entcl_3173</name>
</gene>
<comment type="function">
    <text evidence="1">Transfers a fatty acid residue from the sn-1 position of a phospholipid to the N-linked hydroxyfatty acid chain on the proximal unit of lipid A or its precursors.</text>
</comment>
<comment type="catalytic activity">
    <reaction evidence="1">
        <text>a lipid A + a 1,2-diacyl-sn-glycero-3-phosphocholine = a hepta-acyl lipid A + a 2-acyl-sn-glycero-3-phosphocholine</text>
        <dbReference type="Rhea" id="RHEA:74275"/>
        <dbReference type="ChEBI" id="CHEBI:57643"/>
        <dbReference type="ChEBI" id="CHEBI:57875"/>
        <dbReference type="ChEBI" id="CHEBI:193141"/>
        <dbReference type="ChEBI" id="CHEBI:193142"/>
        <dbReference type="EC" id="2.3.1.251"/>
    </reaction>
</comment>
<comment type="catalytic activity">
    <reaction evidence="1">
        <text>a lipid IVA + a 1,2-diacyl-sn-glycero-3-phosphocholine = a lipid IVB + a 2-acyl-sn-glycero-3-phosphocholine</text>
        <dbReference type="Rhea" id="RHEA:74279"/>
        <dbReference type="ChEBI" id="CHEBI:57643"/>
        <dbReference type="ChEBI" id="CHEBI:57875"/>
        <dbReference type="ChEBI" id="CHEBI:176425"/>
        <dbReference type="ChEBI" id="CHEBI:193143"/>
        <dbReference type="EC" id="2.3.1.251"/>
    </reaction>
</comment>
<comment type="catalytic activity">
    <reaction evidence="1">
        <text>a lipid IIA + a 1,2-diacyl-sn-glycero-3-phosphocholine = a lipid IIB + a 2-acyl-sn-glycero-3-phosphocholine</text>
        <dbReference type="Rhea" id="RHEA:74283"/>
        <dbReference type="ChEBI" id="CHEBI:57643"/>
        <dbReference type="ChEBI" id="CHEBI:57875"/>
        <dbReference type="ChEBI" id="CHEBI:193144"/>
        <dbReference type="ChEBI" id="CHEBI:193145"/>
        <dbReference type="EC" id="2.3.1.251"/>
    </reaction>
</comment>
<comment type="subunit">
    <text evidence="1">Homodimer.</text>
</comment>
<comment type="subcellular location">
    <subcellularLocation>
        <location evidence="1">Cell outer membrane</location>
    </subcellularLocation>
</comment>
<comment type="similarity">
    <text evidence="1 2">Belongs to the lipid A palmitoyltransferase family.</text>
</comment>
<comment type="sequence caution" evidence="2">
    <conflict type="erroneous initiation">
        <sequence resource="EMBL-CDS" id="ADO49419"/>
    </conflict>
    <text>Extended N-terminus.</text>
</comment>
<reference key="1">
    <citation type="journal article" date="2011" name="Stand. Genomic Sci.">
        <title>Complete genome sequence of 'Enterobacter lignolyticus' SCF1.</title>
        <authorList>
            <person name="Deangelis K.M."/>
            <person name="D'Haeseleer P."/>
            <person name="Chivian D."/>
            <person name="Fortney J.L."/>
            <person name="Khudyakov J."/>
            <person name="Simmons B."/>
            <person name="Woo H."/>
            <person name="Arkin A.P."/>
            <person name="Davenport K.W."/>
            <person name="Goodwin L."/>
            <person name="Chen A."/>
            <person name="Ivanova N."/>
            <person name="Kyrpides N.C."/>
            <person name="Mavromatis K."/>
            <person name="Woyke T."/>
            <person name="Hazen T.C."/>
        </authorList>
    </citation>
    <scope>NUCLEOTIDE SEQUENCE [LARGE SCALE GENOMIC DNA]</scope>
    <source>
        <strain>SCF1</strain>
    </source>
</reference>
<keyword id="KW-0012">Acyltransferase</keyword>
<keyword id="KW-0998">Cell outer membrane</keyword>
<keyword id="KW-0472">Membrane</keyword>
<keyword id="KW-1185">Reference proteome</keyword>
<keyword id="KW-0732">Signal</keyword>
<keyword id="KW-0808">Transferase</keyword>
<name>PAGP_ENTLS</name>